<accession>F5HAU9</accession>
<name>TRM5_NEUCR</name>
<organism>
    <name type="scientific">Neurospora crassa (strain ATCC 24698 / 74-OR23-1A / CBS 708.71 / DSM 1257 / FGSC 987)</name>
    <dbReference type="NCBI Taxonomy" id="367110"/>
    <lineage>
        <taxon>Eukaryota</taxon>
        <taxon>Fungi</taxon>
        <taxon>Dikarya</taxon>
        <taxon>Ascomycota</taxon>
        <taxon>Pezizomycotina</taxon>
        <taxon>Sordariomycetes</taxon>
        <taxon>Sordariomycetidae</taxon>
        <taxon>Sordariales</taxon>
        <taxon>Sordariaceae</taxon>
        <taxon>Neurospora</taxon>
    </lineage>
</organism>
<gene>
    <name type="primary">trm5</name>
    <name type="ORF">NCU09311</name>
</gene>
<keyword id="KW-0963">Cytoplasm</keyword>
<keyword id="KW-0489">Methyltransferase</keyword>
<keyword id="KW-0496">Mitochondrion</keyword>
<keyword id="KW-0539">Nucleus</keyword>
<keyword id="KW-1185">Reference proteome</keyword>
<keyword id="KW-0949">S-adenosyl-L-methionine</keyword>
<keyword id="KW-0808">Transferase</keyword>
<keyword id="KW-0819">tRNA processing</keyword>
<protein>
    <recommendedName>
        <fullName evidence="1">tRNA (guanine(37)-N(1))-methyltransferase</fullName>
        <ecNumber evidence="1">2.1.1.228</ecNumber>
    </recommendedName>
    <alternativeName>
        <fullName evidence="1">M1G-methyltransferase</fullName>
    </alternativeName>
    <alternativeName>
        <fullName evidence="1">tRNA [GM37] methyltransferase</fullName>
    </alternativeName>
    <alternativeName>
        <fullName evidence="1">tRNA methyltransferase 5</fullName>
    </alternativeName>
</protein>
<comment type="function">
    <text evidence="1">Specifically methylates the N1 position of guanosine-37 in various cytoplasmic and mitochondrial tRNAs. Methylation is not dependent on the nature of the nucleoside 5' of the target nucleoside. This is the first step in the biosynthesis of wybutosine (yW), a modified base adjacent to the anticodon of tRNAs and required for accurate decoding.</text>
</comment>
<comment type="catalytic activity">
    <reaction evidence="1">
        <text>guanosine(37) in tRNA + S-adenosyl-L-methionine = N(1)-methylguanosine(37) in tRNA + S-adenosyl-L-homocysteine + H(+)</text>
        <dbReference type="Rhea" id="RHEA:36899"/>
        <dbReference type="Rhea" id="RHEA-COMP:10145"/>
        <dbReference type="Rhea" id="RHEA-COMP:10147"/>
        <dbReference type="ChEBI" id="CHEBI:15378"/>
        <dbReference type="ChEBI" id="CHEBI:57856"/>
        <dbReference type="ChEBI" id="CHEBI:59789"/>
        <dbReference type="ChEBI" id="CHEBI:73542"/>
        <dbReference type="ChEBI" id="CHEBI:74269"/>
        <dbReference type="EC" id="2.1.1.228"/>
    </reaction>
</comment>
<comment type="subunit">
    <text evidence="1">Monomer.</text>
</comment>
<comment type="subcellular location">
    <subcellularLocation>
        <location evidence="1">Mitochondrion matrix</location>
    </subcellularLocation>
    <subcellularLocation>
        <location evidence="1">Nucleus</location>
    </subcellularLocation>
    <subcellularLocation>
        <location evidence="1">Cytoplasm</location>
    </subcellularLocation>
    <text evidence="1">Predominantly in the mitochondria and in the nucleus.</text>
</comment>
<comment type="similarity">
    <text evidence="3">Belongs to the class I-like SAM-binding methyltransferase superfamily. TRM5/TYW2 family.</text>
</comment>
<feature type="chain" id="PRO_0000414168" description="tRNA (guanine(37)-N(1))-methyltransferase">
    <location>
        <begin position="1"/>
        <end position="475"/>
    </location>
</feature>
<feature type="region of interest" description="Disordered" evidence="2">
    <location>
        <begin position="1"/>
        <end position="20"/>
    </location>
</feature>
<feature type="binding site" evidence="1">
    <location>
        <position position="248"/>
    </location>
    <ligand>
        <name>S-adenosyl-L-methionine</name>
        <dbReference type="ChEBI" id="CHEBI:59789"/>
    </ligand>
</feature>
<feature type="binding site" evidence="1">
    <location>
        <begin position="286"/>
        <end position="287"/>
    </location>
    <ligand>
        <name>S-adenosyl-L-methionine</name>
        <dbReference type="ChEBI" id="CHEBI:59789"/>
    </ligand>
</feature>
<feature type="binding site" evidence="1">
    <location>
        <begin position="314"/>
        <end position="315"/>
    </location>
    <ligand>
        <name>S-adenosyl-L-methionine</name>
        <dbReference type="ChEBI" id="CHEBI:59789"/>
    </ligand>
</feature>
<feature type="binding site" evidence="1">
    <location>
        <position position="369"/>
    </location>
    <ligand>
        <name>S-adenosyl-L-methionine</name>
        <dbReference type="ChEBI" id="CHEBI:59789"/>
    </ligand>
</feature>
<evidence type="ECO:0000255" key="1">
    <source>
        <dbReference type="HAMAP-Rule" id="MF_03152"/>
    </source>
</evidence>
<evidence type="ECO:0000256" key="2">
    <source>
        <dbReference type="SAM" id="MobiDB-lite"/>
    </source>
</evidence>
<evidence type="ECO:0000305" key="3"/>
<dbReference type="EC" id="2.1.1.228" evidence="1"/>
<dbReference type="EMBL" id="CM002236">
    <property type="protein sequence ID" value="EAA34717.2"/>
    <property type="molecule type" value="Genomic_DNA"/>
</dbReference>
<dbReference type="SMR" id="F5HAU9"/>
<dbReference type="FunCoup" id="F5HAU9">
    <property type="interactions" value="1078"/>
</dbReference>
<dbReference type="STRING" id="367110.F5HAU9"/>
<dbReference type="PaxDb" id="5141-EFNCRP00000009138"/>
<dbReference type="EnsemblFungi" id="EAA34717">
    <property type="protein sequence ID" value="EAA34717"/>
    <property type="gene ID" value="NCU09311"/>
</dbReference>
<dbReference type="KEGG" id="ncr:NCU09311"/>
<dbReference type="VEuPathDB" id="FungiDB:NCU09311"/>
<dbReference type="HOGENOM" id="CLU_022610_2_2_1"/>
<dbReference type="InParanoid" id="F5HAU9"/>
<dbReference type="OMA" id="VGSHSQF"/>
<dbReference type="OrthoDB" id="408788at2759"/>
<dbReference type="Proteomes" id="UP000001805">
    <property type="component" value="Chromosome 1, Linkage Group I"/>
</dbReference>
<dbReference type="GO" id="GO:0005737">
    <property type="term" value="C:cytoplasm"/>
    <property type="evidence" value="ECO:0000318"/>
    <property type="project" value="GO_Central"/>
</dbReference>
<dbReference type="GO" id="GO:0005759">
    <property type="term" value="C:mitochondrial matrix"/>
    <property type="evidence" value="ECO:0000318"/>
    <property type="project" value="GO_Central"/>
</dbReference>
<dbReference type="GO" id="GO:0005634">
    <property type="term" value="C:nucleus"/>
    <property type="evidence" value="ECO:0007669"/>
    <property type="project" value="UniProtKB-SubCell"/>
</dbReference>
<dbReference type="GO" id="GO:0052906">
    <property type="term" value="F:tRNA (guanine(37)-N1)-methyltransferase activity"/>
    <property type="evidence" value="ECO:0007669"/>
    <property type="project" value="UniProtKB-UniRule"/>
</dbReference>
<dbReference type="GO" id="GO:0008175">
    <property type="term" value="F:tRNA methyltransferase activity"/>
    <property type="evidence" value="ECO:0000318"/>
    <property type="project" value="GO_Central"/>
</dbReference>
<dbReference type="GO" id="GO:0070901">
    <property type="term" value="P:mitochondrial tRNA methylation"/>
    <property type="evidence" value="ECO:0000318"/>
    <property type="project" value="GO_Central"/>
</dbReference>
<dbReference type="GO" id="GO:0002939">
    <property type="term" value="P:tRNA N1-guanine methylation"/>
    <property type="evidence" value="ECO:0000318"/>
    <property type="project" value="GO_Central"/>
</dbReference>
<dbReference type="FunFam" id="3.30.300.110:FF:000001">
    <property type="entry name" value="tRNA (guanine(37)-N1)-methyltransferase"/>
    <property type="match status" value="1"/>
</dbReference>
<dbReference type="Gene3D" id="3.30.300.110">
    <property type="entry name" value="Met-10+ protein-like domains"/>
    <property type="match status" value="1"/>
</dbReference>
<dbReference type="Gene3D" id="3.40.50.150">
    <property type="entry name" value="Vaccinia Virus protein VP39"/>
    <property type="match status" value="1"/>
</dbReference>
<dbReference type="HAMAP" id="MF_03152">
    <property type="entry name" value="TRM5"/>
    <property type="match status" value="1"/>
</dbReference>
<dbReference type="InterPro" id="IPR030382">
    <property type="entry name" value="MeTrfase_TRM5/TYW2"/>
</dbReference>
<dbReference type="InterPro" id="IPR029063">
    <property type="entry name" value="SAM-dependent_MTases_sf"/>
</dbReference>
<dbReference type="InterPro" id="IPR056743">
    <property type="entry name" value="TRM5-TYW2-like_MTfase"/>
</dbReference>
<dbReference type="InterPro" id="IPR056744">
    <property type="entry name" value="TRM5/TYW2-like_N"/>
</dbReference>
<dbReference type="InterPro" id="IPR025792">
    <property type="entry name" value="tRNA_Gua_MeTrfase_euk"/>
</dbReference>
<dbReference type="PANTHER" id="PTHR23245:SF36">
    <property type="entry name" value="TRNA (GUANINE(37)-N1)-METHYLTRANSFERASE"/>
    <property type="match status" value="1"/>
</dbReference>
<dbReference type="PANTHER" id="PTHR23245">
    <property type="entry name" value="TRNA METHYLTRANSFERASE"/>
    <property type="match status" value="1"/>
</dbReference>
<dbReference type="Pfam" id="PF02475">
    <property type="entry name" value="TRM5-TYW2_MTfase"/>
    <property type="match status" value="1"/>
</dbReference>
<dbReference type="Pfam" id="PF25133">
    <property type="entry name" value="TYW2_N_2"/>
    <property type="match status" value="1"/>
</dbReference>
<dbReference type="SUPFAM" id="SSF53335">
    <property type="entry name" value="S-adenosyl-L-methionine-dependent methyltransferases"/>
    <property type="match status" value="1"/>
</dbReference>
<dbReference type="PROSITE" id="PS51684">
    <property type="entry name" value="SAM_MT_TRM5_TYW2"/>
    <property type="match status" value="1"/>
</dbReference>
<sequence>MSQSEKENQGSGEGKTQDMAIFSPPVVRSGAGALNRALFTKTVNLAAAAVNDNRLISKYRKELEHSKELLRQDRLSPIVNHPDKALADQGKKCLLLSPNVKAPEPETWGAALKEGVQKKELSVIPYELQLNYDYWTYHDIITSILPEELHDDIPSGFNTAGHVAHMNLRERYIPYKKVIAEVILDKTTNIRTVINKVDNVGAESEFRTFQYEVLAGPDDMQVQVTENACSFEFDYSKVYWNSKLEAEHRRLINMFEPGEVVCDVMAGIGPFAVPAGKKGVFVWANDMNPESNKYMQVAINRNKVSQYVRPICEDGRTFIHHAADSVLEAHKNGEHVLIAPKPPSRAKKAPKPEPKRVDIPPTISHFVMNLPATAIEFLGCYRGVYAGHEDLFSAESGRKLPLVHVHCFSFKADDETPLNDICERITKYLGFPVKPGNPDVEGEVAVHDVRDVAPAKRMFCASFRIPREVAFAERV</sequence>
<reference key="1">
    <citation type="journal article" date="2003" name="Nature">
        <title>The genome sequence of the filamentous fungus Neurospora crassa.</title>
        <authorList>
            <person name="Galagan J.E."/>
            <person name="Calvo S.E."/>
            <person name="Borkovich K.A."/>
            <person name="Selker E.U."/>
            <person name="Read N.D."/>
            <person name="Jaffe D.B."/>
            <person name="FitzHugh W."/>
            <person name="Ma L.-J."/>
            <person name="Smirnov S."/>
            <person name="Purcell S."/>
            <person name="Rehman B."/>
            <person name="Elkins T."/>
            <person name="Engels R."/>
            <person name="Wang S."/>
            <person name="Nielsen C.B."/>
            <person name="Butler J."/>
            <person name="Endrizzi M."/>
            <person name="Qui D."/>
            <person name="Ianakiev P."/>
            <person name="Bell-Pedersen D."/>
            <person name="Nelson M.A."/>
            <person name="Werner-Washburne M."/>
            <person name="Selitrennikoff C.P."/>
            <person name="Kinsey J.A."/>
            <person name="Braun E.L."/>
            <person name="Zelter A."/>
            <person name="Schulte U."/>
            <person name="Kothe G.O."/>
            <person name="Jedd G."/>
            <person name="Mewes H.-W."/>
            <person name="Staben C."/>
            <person name="Marcotte E."/>
            <person name="Greenberg D."/>
            <person name="Roy A."/>
            <person name="Foley K."/>
            <person name="Naylor J."/>
            <person name="Stange-Thomann N."/>
            <person name="Barrett R."/>
            <person name="Gnerre S."/>
            <person name="Kamal M."/>
            <person name="Kamvysselis M."/>
            <person name="Mauceli E.W."/>
            <person name="Bielke C."/>
            <person name="Rudd S."/>
            <person name="Frishman D."/>
            <person name="Krystofova S."/>
            <person name="Rasmussen C."/>
            <person name="Metzenberg R.L."/>
            <person name="Perkins D.D."/>
            <person name="Kroken S."/>
            <person name="Cogoni C."/>
            <person name="Macino G."/>
            <person name="Catcheside D.E.A."/>
            <person name="Li W."/>
            <person name="Pratt R.J."/>
            <person name="Osmani S.A."/>
            <person name="DeSouza C.P.C."/>
            <person name="Glass N.L."/>
            <person name="Orbach M.J."/>
            <person name="Berglund J.A."/>
            <person name="Voelker R."/>
            <person name="Yarden O."/>
            <person name="Plamann M."/>
            <person name="Seiler S."/>
            <person name="Dunlap J.C."/>
            <person name="Radford A."/>
            <person name="Aramayo R."/>
            <person name="Natvig D.O."/>
            <person name="Alex L.A."/>
            <person name="Mannhaupt G."/>
            <person name="Ebbole D.J."/>
            <person name="Freitag M."/>
            <person name="Paulsen I."/>
            <person name="Sachs M.S."/>
            <person name="Lander E.S."/>
            <person name="Nusbaum C."/>
            <person name="Birren B.W."/>
        </authorList>
    </citation>
    <scope>NUCLEOTIDE SEQUENCE [LARGE SCALE GENOMIC DNA]</scope>
    <source>
        <strain>ATCC 24698 / 74-OR23-1A / CBS 708.71 / DSM 1257 / FGSC 987</strain>
    </source>
</reference>
<proteinExistence type="inferred from homology"/>